<name>PYRE_METAC</name>
<proteinExistence type="inferred from homology"/>
<reference key="1">
    <citation type="journal article" date="2002" name="Genome Res.">
        <title>The genome of Methanosarcina acetivorans reveals extensive metabolic and physiological diversity.</title>
        <authorList>
            <person name="Galagan J.E."/>
            <person name="Nusbaum C."/>
            <person name="Roy A."/>
            <person name="Endrizzi M.G."/>
            <person name="Macdonald P."/>
            <person name="FitzHugh W."/>
            <person name="Calvo S."/>
            <person name="Engels R."/>
            <person name="Smirnov S."/>
            <person name="Atnoor D."/>
            <person name="Brown A."/>
            <person name="Allen N."/>
            <person name="Naylor J."/>
            <person name="Stange-Thomann N."/>
            <person name="DeArellano K."/>
            <person name="Johnson R."/>
            <person name="Linton L."/>
            <person name="McEwan P."/>
            <person name="McKernan K."/>
            <person name="Talamas J."/>
            <person name="Tirrell A."/>
            <person name="Ye W."/>
            <person name="Zimmer A."/>
            <person name="Barber R.D."/>
            <person name="Cann I."/>
            <person name="Graham D.E."/>
            <person name="Grahame D.A."/>
            <person name="Guss A.M."/>
            <person name="Hedderich R."/>
            <person name="Ingram-Smith C."/>
            <person name="Kuettner H.C."/>
            <person name="Krzycki J.A."/>
            <person name="Leigh J.A."/>
            <person name="Li W."/>
            <person name="Liu J."/>
            <person name="Mukhopadhyay B."/>
            <person name="Reeve J.N."/>
            <person name="Smith K."/>
            <person name="Springer T.A."/>
            <person name="Umayam L.A."/>
            <person name="White O."/>
            <person name="White R.H."/>
            <person name="de Macario E.C."/>
            <person name="Ferry J.G."/>
            <person name="Jarrell K.F."/>
            <person name="Jing H."/>
            <person name="Macario A.J.L."/>
            <person name="Paulsen I.T."/>
            <person name="Pritchett M."/>
            <person name="Sowers K.R."/>
            <person name="Swanson R.V."/>
            <person name="Zinder S.H."/>
            <person name="Lander E."/>
            <person name="Metcalf W.W."/>
            <person name="Birren B."/>
        </authorList>
    </citation>
    <scope>NUCLEOTIDE SEQUENCE [LARGE SCALE GENOMIC DNA]</scope>
    <source>
        <strain>ATCC 35395 / DSM 2834 / JCM 12185 / C2A</strain>
    </source>
</reference>
<sequence length="187" mass="20097">MSQSKPDTGNEIETQKQELIAALKACGAVRYGDFTLSSGKKSKYYIDIKKASTDPKTLKIIARQAALRVKEMGVGTVAGVELGGVPLATAVSLETGLPLLIVRKSVKEYGTKSRFVGDLRPEDRLVMLEDVTTSGGSVRDAIKVVRETGACVKYVITVVDREEGAKEKLKEADAELVPLVTASDLLK</sequence>
<comment type="function">
    <text evidence="1">Catalyzes the transfer of a ribosyl phosphate group from 5-phosphoribose 1-diphosphate to orotate, leading to the formation of orotidine monophosphate (OMP).</text>
</comment>
<comment type="catalytic activity">
    <reaction evidence="1">
        <text>orotidine 5'-phosphate + diphosphate = orotate + 5-phospho-alpha-D-ribose 1-diphosphate</text>
        <dbReference type="Rhea" id="RHEA:10380"/>
        <dbReference type="ChEBI" id="CHEBI:30839"/>
        <dbReference type="ChEBI" id="CHEBI:33019"/>
        <dbReference type="ChEBI" id="CHEBI:57538"/>
        <dbReference type="ChEBI" id="CHEBI:58017"/>
        <dbReference type="EC" id="2.4.2.10"/>
    </reaction>
</comment>
<comment type="cofactor">
    <cofactor evidence="1">
        <name>Mg(2+)</name>
        <dbReference type="ChEBI" id="CHEBI:18420"/>
    </cofactor>
</comment>
<comment type="pathway">
    <text evidence="1">Pyrimidine metabolism; UMP biosynthesis via de novo pathway; UMP from orotate: step 1/2.</text>
</comment>
<comment type="subunit">
    <text evidence="1">Homodimer.</text>
</comment>
<comment type="similarity">
    <text evidence="1">Belongs to the purine/pyrimidine phosphoribosyltransferase family. PyrE subfamily.</text>
</comment>
<organism>
    <name type="scientific">Methanosarcina acetivorans (strain ATCC 35395 / DSM 2834 / JCM 12185 / C2A)</name>
    <dbReference type="NCBI Taxonomy" id="188937"/>
    <lineage>
        <taxon>Archaea</taxon>
        <taxon>Methanobacteriati</taxon>
        <taxon>Methanobacteriota</taxon>
        <taxon>Stenosarchaea group</taxon>
        <taxon>Methanomicrobia</taxon>
        <taxon>Methanosarcinales</taxon>
        <taxon>Methanosarcinaceae</taxon>
        <taxon>Methanosarcina</taxon>
    </lineage>
</organism>
<evidence type="ECO:0000255" key="1">
    <source>
        <dbReference type="HAMAP-Rule" id="MF_01208"/>
    </source>
</evidence>
<gene>
    <name evidence="1" type="primary">pyrE</name>
    <name type="ordered locus">MA_3307</name>
</gene>
<dbReference type="EC" id="2.4.2.10" evidence="1"/>
<dbReference type="EMBL" id="AE010299">
    <property type="protein sequence ID" value="AAM06677.1"/>
    <property type="molecule type" value="Genomic_DNA"/>
</dbReference>
<dbReference type="RefSeq" id="WP_011023240.1">
    <property type="nucleotide sequence ID" value="NC_003552.1"/>
</dbReference>
<dbReference type="SMR" id="P58859"/>
<dbReference type="FunCoup" id="P58859">
    <property type="interactions" value="135"/>
</dbReference>
<dbReference type="STRING" id="188937.MA_3307"/>
<dbReference type="EnsemblBacteria" id="AAM06677">
    <property type="protein sequence ID" value="AAM06677"/>
    <property type="gene ID" value="MA_3307"/>
</dbReference>
<dbReference type="GeneID" id="1475200"/>
<dbReference type="KEGG" id="mac:MA_3307"/>
<dbReference type="HOGENOM" id="CLU_074878_2_0_2"/>
<dbReference type="InParanoid" id="P58859"/>
<dbReference type="OrthoDB" id="9089at2157"/>
<dbReference type="PhylomeDB" id="P58859"/>
<dbReference type="UniPathway" id="UPA00070">
    <property type="reaction ID" value="UER00119"/>
</dbReference>
<dbReference type="Proteomes" id="UP000002487">
    <property type="component" value="Chromosome"/>
</dbReference>
<dbReference type="GO" id="GO:0000287">
    <property type="term" value="F:magnesium ion binding"/>
    <property type="evidence" value="ECO:0007669"/>
    <property type="project" value="UniProtKB-UniRule"/>
</dbReference>
<dbReference type="GO" id="GO:0004588">
    <property type="term" value="F:orotate phosphoribosyltransferase activity"/>
    <property type="evidence" value="ECO:0000318"/>
    <property type="project" value="GO_Central"/>
</dbReference>
<dbReference type="GO" id="GO:0044205">
    <property type="term" value="P:'de novo' UMP biosynthetic process"/>
    <property type="evidence" value="ECO:0007669"/>
    <property type="project" value="UniProtKB-UniRule"/>
</dbReference>
<dbReference type="GO" id="GO:0019856">
    <property type="term" value="P:pyrimidine nucleobase biosynthetic process"/>
    <property type="evidence" value="ECO:0000318"/>
    <property type="project" value="GO_Central"/>
</dbReference>
<dbReference type="GO" id="GO:0006222">
    <property type="term" value="P:UMP biosynthetic process"/>
    <property type="evidence" value="ECO:0000318"/>
    <property type="project" value="GO_Central"/>
</dbReference>
<dbReference type="CDD" id="cd06223">
    <property type="entry name" value="PRTases_typeI"/>
    <property type="match status" value="1"/>
</dbReference>
<dbReference type="FunFam" id="3.40.50.2020:FF:000029">
    <property type="entry name" value="Orotate phosphoribosyltransferase"/>
    <property type="match status" value="1"/>
</dbReference>
<dbReference type="Gene3D" id="3.40.50.2020">
    <property type="match status" value="1"/>
</dbReference>
<dbReference type="HAMAP" id="MF_01208">
    <property type="entry name" value="PyrE"/>
    <property type="match status" value="1"/>
</dbReference>
<dbReference type="InterPro" id="IPR023031">
    <property type="entry name" value="OPRT"/>
</dbReference>
<dbReference type="InterPro" id="IPR004467">
    <property type="entry name" value="Or_phspho_trans_dom"/>
</dbReference>
<dbReference type="InterPro" id="IPR000836">
    <property type="entry name" value="PRibTrfase_dom"/>
</dbReference>
<dbReference type="InterPro" id="IPR029057">
    <property type="entry name" value="PRTase-like"/>
</dbReference>
<dbReference type="NCBIfam" id="TIGR00336">
    <property type="entry name" value="pyrE"/>
    <property type="match status" value="1"/>
</dbReference>
<dbReference type="PANTHER" id="PTHR19278">
    <property type="entry name" value="OROTATE PHOSPHORIBOSYLTRANSFERASE"/>
    <property type="match status" value="1"/>
</dbReference>
<dbReference type="PANTHER" id="PTHR19278:SF9">
    <property type="entry name" value="URIDINE 5'-MONOPHOSPHATE SYNTHASE"/>
    <property type="match status" value="1"/>
</dbReference>
<dbReference type="Pfam" id="PF00156">
    <property type="entry name" value="Pribosyltran"/>
    <property type="match status" value="1"/>
</dbReference>
<dbReference type="SUPFAM" id="SSF53271">
    <property type="entry name" value="PRTase-like"/>
    <property type="match status" value="1"/>
</dbReference>
<keyword id="KW-0328">Glycosyltransferase</keyword>
<keyword id="KW-0460">Magnesium</keyword>
<keyword id="KW-0665">Pyrimidine biosynthesis</keyword>
<keyword id="KW-1185">Reference proteome</keyword>
<keyword id="KW-0808">Transferase</keyword>
<accession>P58859</accession>
<feature type="chain" id="PRO_0000110778" description="Orotate phosphoribosyltransferase">
    <location>
        <begin position="1"/>
        <end position="187"/>
    </location>
</feature>
<feature type="binding site" evidence="1">
    <location>
        <position position="103"/>
    </location>
    <ligand>
        <name>5-phospho-alpha-D-ribose 1-diphosphate</name>
        <dbReference type="ChEBI" id="CHEBI:58017"/>
        <note>ligand shared between dimeric partners</note>
    </ligand>
</feature>
<feature type="binding site" description="in other chain" evidence="1">
    <location>
        <position position="104"/>
    </location>
    <ligand>
        <name>5-phospho-alpha-D-ribose 1-diphosphate</name>
        <dbReference type="ChEBI" id="CHEBI:58017"/>
        <note>ligand shared between dimeric partners</note>
    </ligand>
</feature>
<feature type="binding site" evidence="1">
    <location>
        <position position="107"/>
    </location>
    <ligand>
        <name>5-phospho-alpha-D-ribose 1-diphosphate</name>
        <dbReference type="ChEBI" id="CHEBI:58017"/>
        <note>ligand shared between dimeric partners</note>
    </ligand>
</feature>
<feature type="binding site" description="in other chain" evidence="1">
    <location>
        <begin position="129"/>
        <end position="137"/>
    </location>
    <ligand>
        <name>5-phospho-alpha-D-ribose 1-diphosphate</name>
        <dbReference type="ChEBI" id="CHEBI:58017"/>
        <note>ligand shared between dimeric partners</note>
    </ligand>
</feature>
<feature type="binding site" evidence="1">
    <location>
        <position position="133"/>
    </location>
    <ligand>
        <name>orotate</name>
        <dbReference type="ChEBI" id="CHEBI:30839"/>
    </ligand>
</feature>
<feature type="binding site" evidence="1">
    <location>
        <position position="161"/>
    </location>
    <ligand>
        <name>orotate</name>
        <dbReference type="ChEBI" id="CHEBI:30839"/>
    </ligand>
</feature>
<protein>
    <recommendedName>
        <fullName evidence="1">Orotate phosphoribosyltransferase</fullName>
        <shortName evidence="1">OPRT</shortName>
        <shortName evidence="1">OPRTase</shortName>
        <ecNumber evidence="1">2.4.2.10</ecNumber>
    </recommendedName>
</protein>